<name>RSMB_SALDC</name>
<dbReference type="EC" id="2.1.1.176" evidence="1"/>
<dbReference type="EMBL" id="CP001144">
    <property type="protein sequence ID" value="ACH76343.1"/>
    <property type="molecule type" value="Genomic_DNA"/>
</dbReference>
<dbReference type="RefSeq" id="WP_000744615.1">
    <property type="nucleotide sequence ID" value="NC_011205.1"/>
</dbReference>
<dbReference type="SMR" id="B5FJI4"/>
<dbReference type="KEGG" id="sed:SeD_A3775"/>
<dbReference type="HOGENOM" id="CLU_005316_0_4_6"/>
<dbReference type="Proteomes" id="UP000008322">
    <property type="component" value="Chromosome"/>
</dbReference>
<dbReference type="GO" id="GO:0005829">
    <property type="term" value="C:cytosol"/>
    <property type="evidence" value="ECO:0007669"/>
    <property type="project" value="TreeGrafter"/>
</dbReference>
<dbReference type="GO" id="GO:0003723">
    <property type="term" value="F:RNA binding"/>
    <property type="evidence" value="ECO:0007669"/>
    <property type="project" value="UniProtKB-KW"/>
</dbReference>
<dbReference type="GO" id="GO:0009383">
    <property type="term" value="F:rRNA (cytosine-C5-)-methyltransferase activity"/>
    <property type="evidence" value="ECO:0007669"/>
    <property type="project" value="TreeGrafter"/>
</dbReference>
<dbReference type="GO" id="GO:0006355">
    <property type="term" value="P:regulation of DNA-templated transcription"/>
    <property type="evidence" value="ECO:0007669"/>
    <property type="project" value="InterPro"/>
</dbReference>
<dbReference type="GO" id="GO:0070475">
    <property type="term" value="P:rRNA base methylation"/>
    <property type="evidence" value="ECO:0007669"/>
    <property type="project" value="TreeGrafter"/>
</dbReference>
<dbReference type="CDD" id="cd02440">
    <property type="entry name" value="AdoMet_MTases"/>
    <property type="match status" value="1"/>
</dbReference>
<dbReference type="CDD" id="cd00620">
    <property type="entry name" value="Methyltransferase_Sun"/>
    <property type="match status" value="1"/>
</dbReference>
<dbReference type="FunFam" id="1.10.287.730:FF:000001">
    <property type="entry name" value="Ribosomal RNA small subunit methyltransferase B"/>
    <property type="match status" value="1"/>
</dbReference>
<dbReference type="FunFam" id="1.10.940.10:FF:000002">
    <property type="entry name" value="Ribosomal RNA small subunit methyltransferase B"/>
    <property type="match status" value="1"/>
</dbReference>
<dbReference type="FunFam" id="3.30.70.1170:FF:000002">
    <property type="entry name" value="Ribosomal RNA small subunit methyltransferase B"/>
    <property type="match status" value="1"/>
</dbReference>
<dbReference type="FunFam" id="3.40.50.150:FF:000022">
    <property type="entry name" value="Ribosomal RNA small subunit methyltransferase B"/>
    <property type="match status" value="1"/>
</dbReference>
<dbReference type="Gene3D" id="1.10.287.730">
    <property type="entry name" value="Helix hairpin bin"/>
    <property type="match status" value="1"/>
</dbReference>
<dbReference type="Gene3D" id="1.10.940.10">
    <property type="entry name" value="NusB-like"/>
    <property type="match status" value="1"/>
</dbReference>
<dbReference type="Gene3D" id="3.30.70.1170">
    <property type="entry name" value="Sun protein, domain 3"/>
    <property type="match status" value="1"/>
</dbReference>
<dbReference type="Gene3D" id="3.40.50.150">
    <property type="entry name" value="Vaccinia Virus protein VP39"/>
    <property type="match status" value="1"/>
</dbReference>
<dbReference type="HAMAP" id="MF_01856">
    <property type="entry name" value="16SrRNA_methyltr_B"/>
    <property type="match status" value="1"/>
</dbReference>
<dbReference type="InterPro" id="IPR049560">
    <property type="entry name" value="MeTrfase_RsmB-F_NOP2_cat"/>
</dbReference>
<dbReference type="InterPro" id="IPR001678">
    <property type="entry name" value="MeTrfase_RsmB-F_NOP2_dom"/>
</dbReference>
<dbReference type="InterPro" id="IPR035926">
    <property type="entry name" value="NusB-like_sf"/>
</dbReference>
<dbReference type="InterPro" id="IPR006027">
    <property type="entry name" value="NusB_RsmB_TIM44"/>
</dbReference>
<dbReference type="InterPro" id="IPR023267">
    <property type="entry name" value="RCMT"/>
</dbReference>
<dbReference type="InterPro" id="IPR004573">
    <property type="entry name" value="rRNA_ssu_MeTfrase_B"/>
</dbReference>
<dbReference type="InterPro" id="IPR023541">
    <property type="entry name" value="rRNA_ssu_MeTfrase_B_ent"/>
</dbReference>
<dbReference type="InterPro" id="IPR054728">
    <property type="entry name" value="RsmB-like_ferredoxin"/>
</dbReference>
<dbReference type="InterPro" id="IPR048019">
    <property type="entry name" value="RsmB-like_N"/>
</dbReference>
<dbReference type="InterPro" id="IPR018314">
    <property type="entry name" value="RsmB/NOL1/NOP2-like_CS"/>
</dbReference>
<dbReference type="InterPro" id="IPR029063">
    <property type="entry name" value="SAM-dependent_MTases_sf"/>
</dbReference>
<dbReference type="NCBIfam" id="NF008149">
    <property type="entry name" value="PRK10901.1"/>
    <property type="match status" value="1"/>
</dbReference>
<dbReference type="NCBIfam" id="NF011494">
    <property type="entry name" value="PRK14902.1"/>
    <property type="match status" value="1"/>
</dbReference>
<dbReference type="NCBIfam" id="TIGR00563">
    <property type="entry name" value="rsmB"/>
    <property type="match status" value="1"/>
</dbReference>
<dbReference type="PANTHER" id="PTHR22807:SF61">
    <property type="entry name" value="NOL1_NOP2_SUN FAMILY PROTEIN _ ANTITERMINATION NUSB DOMAIN-CONTAINING PROTEIN"/>
    <property type="match status" value="1"/>
</dbReference>
<dbReference type="PANTHER" id="PTHR22807">
    <property type="entry name" value="NOP2 YEAST -RELATED NOL1/NOP2/FMU SUN DOMAIN-CONTAINING"/>
    <property type="match status" value="1"/>
</dbReference>
<dbReference type="Pfam" id="PF01189">
    <property type="entry name" value="Methyltr_RsmB-F"/>
    <property type="match status" value="1"/>
</dbReference>
<dbReference type="Pfam" id="PF01029">
    <property type="entry name" value="NusB"/>
    <property type="match status" value="1"/>
</dbReference>
<dbReference type="Pfam" id="PF22458">
    <property type="entry name" value="RsmF-B_ferredox"/>
    <property type="match status" value="1"/>
</dbReference>
<dbReference type="PRINTS" id="PR02008">
    <property type="entry name" value="RCMTFAMILY"/>
</dbReference>
<dbReference type="SUPFAM" id="SSF48013">
    <property type="entry name" value="NusB-like"/>
    <property type="match status" value="1"/>
</dbReference>
<dbReference type="SUPFAM" id="SSF53335">
    <property type="entry name" value="S-adenosyl-L-methionine-dependent methyltransferases"/>
    <property type="match status" value="1"/>
</dbReference>
<dbReference type="PROSITE" id="PS01153">
    <property type="entry name" value="NOL1_NOP2_SUN"/>
    <property type="match status" value="1"/>
</dbReference>
<dbReference type="PROSITE" id="PS51686">
    <property type="entry name" value="SAM_MT_RSMB_NOP"/>
    <property type="match status" value="1"/>
</dbReference>
<evidence type="ECO:0000255" key="1">
    <source>
        <dbReference type="HAMAP-Rule" id="MF_01856"/>
    </source>
</evidence>
<evidence type="ECO:0000256" key="2">
    <source>
        <dbReference type="SAM" id="MobiDB-lite"/>
    </source>
</evidence>
<protein>
    <recommendedName>
        <fullName evidence="1">Ribosomal RNA small subunit methyltransferase B</fullName>
        <ecNumber evidence="1">2.1.1.176</ecNumber>
    </recommendedName>
    <alternativeName>
        <fullName evidence="1">16S rRNA m5C967 methyltransferase</fullName>
    </alternativeName>
    <alternativeName>
        <fullName evidence="1">rRNA (cytosine-C(5)-)-methyltransferase RsmB</fullName>
    </alternativeName>
</protein>
<reference key="1">
    <citation type="journal article" date="2011" name="J. Bacteriol.">
        <title>Comparative genomics of 28 Salmonella enterica isolates: evidence for CRISPR-mediated adaptive sublineage evolution.</title>
        <authorList>
            <person name="Fricke W.F."/>
            <person name="Mammel M.K."/>
            <person name="McDermott P.F."/>
            <person name="Tartera C."/>
            <person name="White D.G."/>
            <person name="Leclerc J.E."/>
            <person name="Ravel J."/>
            <person name="Cebula T.A."/>
        </authorList>
    </citation>
    <scope>NUCLEOTIDE SEQUENCE [LARGE SCALE GENOMIC DNA]</scope>
    <source>
        <strain>CT_02021853</strain>
    </source>
</reference>
<accession>B5FJI4</accession>
<feature type="chain" id="PRO_0000366166" description="Ribosomal RNA small subunit methyltransferase B">
    <location>
        <begin position="1"/>
        <end position="429"/>
    </location>
</feature>
<feature type="region of interest" description="Disordered" evidence="2">
    <location>
        <begin position="397"/>
        <end position="419"/>
    </location>
</feature>
<feature type="compositionally biased region" description="Polar residues" evidence="2">
    <location>
        <begin position="400"/>
        <end position="412"/>
    </location>
</feature>
<feature type="active site" description="Nucleophile" evidence="1">
    <location>
        <position position="375"/>
    </location>
</feature>
<feature type="binding site" evidence="1">
    <location>
        <begin position="254"/>
        <end position="260"/>
    </location>
    <ligand>
        <name>S-adenosyl-L-methionine</name>
        <dbReference type="ChEBI" id="CHEBI:59789"/>
    </ligand>
</feature>
<feature type="binding site" evidence="1">
    <location>
        <position position="277"/>
    </location>
    <ligand>
        <name>S-adenosyl-L-methionine</name>
        <dbReference type="ChEBI" id="CHEBI:59789"/>
    </ligand>
</feature>
<feature type="binding site" evidence="1">
    <location>
        <position position="303"/>
    </location>
    <ligand>
        <name>S-adenosyl-L-methionine</name>
        <dbReference type="ChEBI" id="CHEBI:59789"/>
    </ligand>
</feature>
<feature type="binding site" evidence="1">
    <location>
        <position position="322"/>
    </location>
    <ligand>
        <name>S-adenosyl-L-methionine</name>
        <dbReference type="ChEBI" id="CHEBI:59789"/>
    </ligand>
</feature>
<gene>
    <name evidence="1" type="primary">rsmB</name>
    <name evidence="1" type="synonym">sun</name>
    <name type="ordered locus">SeD_A3775</name>
</gene>
<keyword id="KW-0963">Cytoplasm</keyword>
<keyword id="KW-0489">Methyltransferase</keyword>
<keyword id="KW-0694">RNA-binding</keyword>
<keyword id="KW-0698">rRNA processing</keyword>
<keyword id="KW-0949">S-adenosyl-L-methionine</keyword>
<keyword id="KW-0808">Transferase</keyword>
<proteinExistence type="inferred from homology"/>
<organism>
    <name type="scientific">Salmonella dublin (strain CT_02021853)</name>
    <dbReference type="NCBI Taxonomy" id="439851"/>
    <lineage>
        <taxon>Bacteria</taxon>
        <taxon>Pseudomonadati</taxon>
        <taxon>Pseudomonadota</taxon>
        <taxon>Gammaproteobacteria</taxon>
        <taxon>Enterobacterales</taxon>
        <taxon>Enterobacteriaceae</taxon>
        <taxon>Salmonella</taxon>
    </lineage>
</organism>
<comment type="function">
    <text evidence="1">Specifically methylates the cytosine at position 967 (m5C967) of 16S rRNA.</text>
</comment>
<comment type="catalytic activity">
    <reaction evidence="1">
        <text>cytidine(967) in 16S rRNA + S-adenosyl-L-methionine = 5-methylcytidine(967) in 16S rRNA + S-adenosyl-L-homocysteine + H(+)</text>
        <dbReference type="Rhea" id="RHEA:42748"/>
        <dbReference type="Rhea" id="RHEA-COMP:10219"/>
        <dbReference type="Rhea" id="RHEA-COMP:10220"/>
        <dbReference type="ChEBI" id="CHEBI:15378"/>
        <dbReference type="ChEBI" id="CHEBI:57856"/>
        <dbReference type="ChEBI" id="CHEBI:59789"/>
        <dbReference type="ChEBI" id="CHEBI:74483"/>
        <dbReference type="ChEBI" id="CHEBI:82748"/>
        <dbReference type="EC" id="2.1.1.176"/>
    </reaction>
</comment>
<comment type="subcellular location">
    <subcellularLocation>
        <location evidence="1">Cytoplasm</location>
    </subcellularLocation>
</comment>
<comment type="similarity">
    <text evidence="1">Belongs to the class I-like SAM-binding methyltransferase superfamily. RsmB/NOP family.</text>
</comment>
<sequence>MKKQNNLRSLAAQAVEQVVEQGQSLSNVLPPLQQKVADKDKALLQELCFGVLRTLSQLEWLINKLMSRPMTGKQRTVHYLIMVGFYQLLYTRVPPHAALAETVEGAVSIKRPQLKGLINGVLRQFQRQQETLLNEFATSDARFLHPGWLVKRLQNAYPTQWQRIIEANNQRPPMWLRVNRTHHTRDGWLGLLEDAGMKGYPHPDYPDAVRLETPAPVHALPGFAEGWVTVQDASAQGCAVFLAPQNGEHILDLCSAPGGKTTHILEVAPEADVLAVDIDEQRLSRVYDNLKRLGMKATVKQGDGRYPAQWCGEQQFDRILLDAPCSATGVIRRHPDIKWLRRDRDIVELAQLQAEILDAVWPRLKPGGTLVYATCSVLPEENRDQIKTFLQRTPDAALSETGTPDQPGQQNLPGGEEGDGFFYAKLIKK</sequence>